<dbReference type="EMBL" id="AABR03073341">
    <property type="status" value="NOT_ANNOTATED_CDS"/>
    <property type="molecule type" value="Genomic_DNA"/>
</dbReference>
<dbReference type="EMBL" id="BK004044">
    <property type="protein sequence ID" value="DAA04478.1"/>
    <property type="molecule type" value="mRNA"/>
</dbReference>
<dbReference type="RefSeq" id="NP_001004021.1">
    <property type="nucleotide sequence ID" value="NM_001004021.2"/>
</dbReference>
<dbReference type="SMR" id="Q6IFV4"/>
<dbReference type="FunCoup" id="Q6IFV4">
    <property type="interactions" value="154"/>
</dbReference>
<dbReference type="STRING" id="10116.ENSRNOP00000018851"/>
<dbReference type="GlyGen" id="Q6IFV4">
    <property type="glycosylation" value="1 site, 1 O-linked glycan (1 site)"/>
</dbReference>
<dbReference type="PhosphoSitePlus" id="Q6IFV4"/>
<dbReference type="jPOST" id="Q6IFV4"/>
<dbReference type="PaxDb" id="10116-ENSRNOP00000018851"/>
<dbReference type="Ensembl" id="ENSRNOT00000018851.4">
    <property type="protein sequence ID" value="ENSRNOP00000018851.3"/>
    <property type="gene ID" value="ENSRNOG00000014070.4"/>
</dbReference>
<dbReference type="GeneID" id="287699"/>
<dbReference type="KEGG" id="rno:287699"/>
<dbReference type="UCSC" id="RGD:1302937">
    <property type="organism name" value="rat"/>
</dbReference>
<dbReference type="AGR" id="RGD:1302937"/>
<dbReference type="CTD" id="3860"/>
<dbReference type="RGD" id="1302937">
    <property type="gene designation" value="Krt13"/>
</dbReference>
<dbReference type="eggNOG" id="ENOG502QTM6">
    <property type="taxonomic scope" value="Eukaryota"/>
</dbReference>
<dbReference type="GeneTree" id="ENSGT00940000154403"/>
<dbReference type="HOGENOM" id="CLU_012560_8_3_1"/>
<dbReference type="InParanoid" id="Q6IFV4"/>
<dbReference type="OMA" id="DAKMTGF"/>
<dbReference type="OrthoDB" id="2441647at2759"/>
<dbReference type="PhylomeDB" id="Q6IFV4"/>
<dbReference type="TreeFam" id="TF332742"/>
<dbReference type="Reactome" id="R-RNO-6805567">
    <property type="pathway name" value="Keratinization"/>
</dbReference>
<dbReference type="Reactome" id="R-RNO-6809371">
    <property type="pathway name" value="Formation of the cornified envelope"/>
</dbReference>
<dbReference type="PRO" id="PR:Q6IFV4"/>
<dbReference type="Proteomes" id="UP000002494">
    <property type="component" value="Chromosome 10"/>
</dbReference>
<dbReference type="Bgee" id="ENSRNOG00000014070">
    <property type="expression patterns" value="Expressed in esophagus and 13 other cell types or tissues"/>
</dbReference>
<dbReference type="GO" id="GO:0005856">
    <property type="term" value="C:cytoskeleton"/>
    <property type="evidence" value="ECO:0000318"/>
    <property type="project" value="GO_Central"/>
</dbReference>
<dbReference type="GO" id="GO:0045111">
    <property type="term" value="C:intermediate filament cytoskeleton"/>
    <property type="evidence" value="ECO:0000266"/>
    <property type="project" value="RGD"/>
</dbReference>
<dbReference type="GO" id="GO:0045095">
    <property type="term" value="C:keratin filament"/>
    <property type="evidence" value="ECO:0000266"/>
    <property type="project" value="RGD"/>
</dbReference>
<dbReference type="GO" id="GO:0005198">
    <property type="term" value="F:structural molecule activity"/>
    <property type="evidence" value="ECO:0007669"/>
    <property type="project" value="InterPro"/>
</dbReference>
<dbReference type="GO" id="GO:0071300">
    <property type="term" value="P:cellular response to retinoic acid"/>
    <property type="evidence" value="ECO:0000270"/>
    <property type="project" value="RGD"/>
</dbReference>
<dbReference type="GO" id="GO:0007010">
    <property type="term" value="P:cytoskeleton organization"/>
    <property type="evidence" value="ECO:0000266"/>
    <property type="project" value="RGD"/>
</dbReference>
<dbReference type="GO" id="GO:0030855">
    <property type="term" value="P:epithelial cell differentiation"/>
    <property type="evidence" value="ECO:0000318"/>
    <property type="project" value="GO_Central"/>
</dbReference>
<dbReference type="GO" id="GO:0045109">
    <property type="term" value="P:intermediate filament organization"/>
    <property type="evidence" value="ECO:0000318"/>
    <property type="project" value="GO_Central"/>
</dbReference>
<dbReference type="GO" id="GO:0043555">
    <property type="term" value="P:regulation of translation in response to stress"/>
    <property type="evidence" value="ECO:0000250"/>
    <property type="project" value="UniProtKB"/>
</dbReference>
<dbReference type="GO" id="GO:0043587">
    <property type="term" value="P:tongue morphogenesis"/>
    <property type="evidence" value="ECO:0000270"/>
    <property type="project" value="RGD"/>
</dbReference>
<dbReference type="FunFam" id="1.20.5.1160:FF:000002">
    <property type="entry name" value="Type I keratin 10"/>
    <property type="match status" value="1"/>
</dbReference>
<dbReference type="FunFam" id="1.20.5.170:FF:000002">
    <property type="entry name" value="Type I keratin KA11"/>
    <property type="match status" value="1"/>
</dbReference>
<dbReference type="FunFam" id="1.20.5.500:FF:000001">
    <property type="entry name" value="Type II keratin 23"/>
    <property type="match status" value="1"/>
</dbReference>
<dbReference type="Gene3D" id="1.20.5.170">
    <property type="match status" value="1"/>
</dbReference>
<dbReference type="Gene3D" id="1.20.5.500">
    <property type="entry name" value="Single helix bin"/>
    <property type="match status" value="1"/>
</dbReference>
<dbReference type="Gene3D" id="1.20.5.1160">
    <property type="entry name" value="Vasodilator-stimulated phosphoprotein"/>
    <property type="match status" value="1"/>
</dbReference>
<dbReference type="InterPro" id="IPR018039">
    <property type="entry name" value="IF_conserved"/>
</dbReference>
<dbReference type="InterPro" id="IPR039008">
    <property type="entry name" value="IF_rod_dom"/>
</dbReference>
<dbReference type="InterPro" id="IPR002957">
    <property type="entry name" value="Keratin_I"/>
</dbReference>
<dbReference type="PANTHER" id="PTHR23239">
    <property type="entry name" value="INTERMEDIATE FILAMENT"/>
    <property type="match status" value="1"/>
</dbReference>
<dbReference type="PANTHER" id="PTHR23239:SF121">
    <property type="entry name" value="KERATIN, TYPE I CYTOSKELETAL 13"/>
    <property type="match status" value="1"/>
</dbReference>
<dbReference type="Pfam" id="PF00038">
    <property type="entry name" value="Filament"/>
    <property type="match status" value="1"/>
</dbReference>
<dbReference type="PRINTS" id="PR01248">
    <property type="entry name" value="TYPE1KERATIN"/>
</dbReference>
<dbReference type="SMART" id="SM01391">
    <property type="entry name" value="Filament"/>
    <property type="match status" value="1"/>
</dbReference>
<dbReference type="SUPFAM" id="SSF64593">
    <property type="entry name" value="Intermediate filament protein, coiled coil region"/>
    <property type="match status" value="2"/>
</dbReference>
<dbReference type="PROSITE" id="PS00226">
    <property type="entry name" value="IF_ROD_1"/>
    <property type="match status" value="1"/>
</dbReference>
<dbReference type="PROSITE" id="PS51842">
    <property type="entry name" value="IF_ROD_2"/>
    <property type="match status" value="1"/>
</dbReference>
<reference evidence="7" key="1">
    <citation type="journal article" date="2004" name="Nature">
        <title>Genome sequence of the Brown Norway rat yields insights into mammalian evolution.</title>
        <authorList>
            <person name="Gibbs R.A."/>
            <person name="Weinstock G.M."/>
            <person name="Metzker M.L."/>
            <person name="Muzny D.M."/>
            <person name="Sodergren E.J."/>
            <person name="Scherer S."/>
            <person name="Scott G."/>
            <person name="Steffen D."/>
            <person name="Worley K.C."/>
            <person name="Burch P.E."/>
            <person name="Okwuonu G."/>
            <person name="Hines S."/>
            <person name="Lewis L."/>
            <person name="Deramo C."/>
            <person name="Delgado O."/>
            <person name="Dugan-Rocha S."/>
            <person name="Miner G."/>
            <person name="Morgan M."/>
            <person name="Hawes A."/>
            <person name="Gill R."/>
            <person name="Holt R.A."/>
            <person name="Adams M.D."/>
            <person name="Amanatides P.G."/>
            <person name="Baden-Tillson H."/>
            <person name="Barnstead M."/>
            <person name="Chin S."/>
            <person name="Evans C.A."/>
            <person name="Ferriera S."/>
            <person name="Fosler C."/>
            <person name="Glodek A."/>
            <person name="Gu Z."/>
            <person name="Jennings D."/>
            <person name="Kraft C.L."/>
            <person name="Nguyen T."/>
            <person name="Pfannkoch C.M."/>
            <person name="Sitter C."/>
            <person name="Sutton G.G."/>
            <person name="Venter J.C."/>
            <person name="Woodage T."/>
            <person name="Smith D."/>
            <person name="Lee H.-M."/>
            <person name="Gustafson E."/>
            <person name="Cahill P."/>
            <person name="Kana A."/>
            <person name="Doucette-Stamm L."/>
            <person name="Weinstock K."/>
            <person name="Fechtel K."/>
            <person name="Weiss R.B."/>
            <person name="Dunn D.M."/>
            <person name="Green E.D."/>
            <person name="Blakesley R.W."/>
            <person name="Bouffard G.G."/>
            <person name="De Jong P.J."/>
            <person name="Osoegawa K."/>
            <person name="Zhu B."/>
            <person name="Marra M."/>
            <person name="Schein J."/>
            <person name="Bosdet I."/>
            <person name="Fjell C."/>
            <person name="Jones S."/>
            <person name="Krzywinski M."/>
            <person name="Mathewson C."/>
            <person name="Siddiqui A."/>
            <person name="Wye N."/>
            <person name="McPherson J."/>
            <person name="Zhao S."/>
            <person name="Fraser C.M."/>
            <person name="Shetty J."/>
            <person name="Shatsman S."/>
            <person name="Geer K."/>
            <person name="Chen Y."/>
            <person name="Abramzon S."/>
            <person name="Nierman W.C."/>
            <person name="Havlak P.H."/>
            <person name="Chen R."/>
            <person name="Durbin K.J."/>
            <person name="Egan A."/>
            <person name="Ren Y."/>
            <person name="Song X.-Z."/>
            <person name="Li B."/>
            <person name="Liu Y."/>
            <person name="Qin X."/>
            <person name="Cawley S."/>
            <person name="Cooney A.J."/>
            <person name="D'Souza L.M."/>
            <person name="Martin K."/>
            <person name="Wu J.Q."/>
            <person name="Gonzalez-Garay M.L."/>
            <person name="Jackson A.R."/>
            <person name="Kalafus K.J."/>
            <person name="McLeod M.P."/>
            <person name="Milosavljevic A."/>
            <person name="Virk D."/>
            <person name="Volkov A."/>
            <person name="Wheeler D.A."/>
            <person name="Zhang Z."/>
            <person name="Bailey J.A."/>
            <person name="Eichler E.E."/>
            <person name="Tuzun E."/>
            <person name="Birney E."/>
            <person name="Mongin E."/>
            <person name="Ureta-Vidal A."/>
            <person name="Woodwark C."/>
            <person name="Zdobnov E."/>
            <person name="Bork P."/>
            <person name="Suyama M."/>
            <person name="Torrents D."/>
            <person name="Alexandersson M."/>
            <person name="Trask B.J."/>
            <person name="Young J.M."/>
            <person name="Huang H."/>
            <person name="Wang H."/>
            <person name="Xing H."/>
            <person name="Daniels S."/>
            <person name="Gietzen D."/>
            <person name="Schmidt J."/>
            <person name="Stevens K."/>
            <person name="Vitt U."/>
            <person name="Wingrove J."/>
            <person name="Camara F."/>
            <person name="Mar Alba M."/>
            <person name="Abril J.F."/>
            <person name="Guigo R."/>
            <person name="Smit A."/>
            <person name="Dubchak I."/>
            <person name="Rubin E.M."/>
            <person name="Couronne O."/>
            <person name="Poliakov A."/>
            <person name="Huebner N."/>
            <person name="Ganten D."/>
            <person name="Goesele C."/>
            <person name="Hummel O."/>
            <person name="Kreitler T."/>
            <person name="Lee Y.-A."/>
            <person name="Monti J."/>
            <person name="Schulz H."/>
            <person name="Zimdahl H."/>
            <person name="Himmelbauer H."/>
            <person name="Lehrach H."/>
            <person name="Jacob H.J."/>
            <person name="Bromberg S."/>
            <person name="Gullings-Handley J."/>
            <person name="Jensen-Seaman M.I."/>
            <person name="Kwitek A.E."/>
            <person name="Lazar J."/>
            <person name="Pasko D."/>
            <person name="Tonellato P.J."/>
            <person name="Twigger S."/>
            <person name="Ponting C.P."/>
            <person name="Duarte J.M."/>
            <person name="Rice S."/>
            <person name="Goodstadt L."/>
            <person name="Beatson S.A."/>
            <person name="Emes R.D."/>
            <person name="Winter E.E."/>
            <person name="Webber C."/>
            <person name="Brandt P."/>
            <person name="Nyakatura G."/>
            <person name="Adetobi M."/>
            <person name="Chiaromonte F."/>
            <person name="Elnitski L."/>
            <person name="Eswara P."/>
            <person name="Hardison R.C."/>
            <person name="Hou M."/>
            <person name="Kolbe D."/>
            <person name="Makova K."/>
            <person name="Miller W."/>
            <person name="Nekrutenko A."/>
            <person name="Riemer C."/>
            <person name="Schwartz S."/>
            <person name="Taylor J."/>
            <person name="Yang S."/>
            <person name="Zhang Y."/>
            <person name="Lindpaintner K."/>
            <person name="Andrews T.D."/>
            <person name="Caccamo M."/>
            <person name="Clamp M."/>
            <person name="Clarke L."/>
            <person name="Curwen V."/>
            <person name="Durbin R.M."/>
            <person name="Eyras E."/>
            <person name="Searle S.M."/>
            <person name="Cooper G.M."/>
            <person name="Batzoglou S."/>
            <person name="Brudno M."/>
            <person name="Sidow A."/>
            <person name="Stone E.A."/>
            <person name="Payseur B.A."/>
            <person name="Bourque G."/>
            <person name="Lopez-Otin C."/>
            <person name="Puente X.S."/>
            <person name="Chakrabarti K."/>
            <person name="Chatterji S."/>
            <person name="Dewey C."/>
            <person name="Pachter L."/>
            <person name="Bray N."/>
            <person name="Yap V.B."/>
            <person name="Caspi A."/>
            <person name="Tesler G."/>
            <person name="Pevzner P.A."/>
            <person name="Haussler D."/>
            <person name="Roskin K.M."/>
            <person name="Baertsch R."/>
            <person name="Clawson H."/>
            <person name="Furey T.S."/>
            <person name="Hinrichs A.S."/>
            <person name="Karolchik D."/>
            <person name="Kent W.J."/>
            <person name="Rosenbloom K.R."/>
            <person name="Trumbower H."/>
            <person name="Weirauch M."/>
            <person name="Cooper D.N."/>
            <person name="Stenson P.D."/>
            <person name="Ma B."/>
            <person name="Brent M."/>
            <person name="Arumugam M."/>
            <person name="Shteynberg D."/>
            <person name="Copley R.R."/>
            <person name="Taylor M.S."/>
            <person name="Riethman H."/>
            <person name="Mudunuri U."/>
            <person name="Peterson J."/>
            <person name="Guyer M."/>
            <person name="Felsenfeld A."/>
            <person name="Old S."/>
            <person name="Mockrin S."/>
            <person name="Collins F.S."/>
        </authorList>
    </citation>
    <scope>NUCLEOTIDE SEQUENCE [LARGE SCALE GENOMIC DNA]</scope>
    <source>
        <strain evidence="6">Brown Norway</strain>
    </source>
</reference>
<reference evidence="7 8" key="2">
    <citation type="journal article" date="2004" name="Eur. J. Cell Biol.">
        <title>Comprehensive analysis of keratin gene clusters in humans and rodents.</title>
        <authorList>
            <person name="Hesse M."/>
            <person name="Zimek A."/>
            <person name="Weber K."/>
            <person name="Magin T.M."/>
        </authorList>
    </citation>
    <scope>IDENTIFICATION</scope>
    <source>
        <strain evidence="8">Brown Norway</strain>
    </source>
</reference>
<gene>
    <name evidence="2" type="primary">Krt13</name>
    <name evidence="8" type="synonym">Ka13</name>
</gene>
<sequence length="438" mass="47729">MSCRFQSSSMSYGGGFGAGSCQLGGGRNISTCSSRFVTGGSSGGYGGGMSCGFGGGAGGGYGGGFGGGFGGSCGGGFGGGFGDFGSVDGGLLSGNEKITMQNLNDRLASYLEKVRALEAANADLEVKIRDWHLKQSPTSPERDYSAYYKTIEELRIKILEATTDNNRIVLEIDNARLAADDFRLKYENELALRQSVEADINGLRRVLDELTLAKTDLEMQIESLNEELAYLKKNHEEEMKEFSNQAVGQVNVEMDATPGIDLTRVLAEMREQYEALAEKNRRDAEAWFQAKSAELNKEVSSNAAMIQTSKTEITELRRTLQGLEIELQSQLSMKAGLESTLAETECRYALQLQQIQALISSIEAQLSELRSEMECQNQEYKMLLDIKTRLEQEIATYRSLLEGQDAKMTGFNTGGNSTTTSNTSTSPSTSGRPDFRKY</sequence>
<protein>
    <recommendedName>
        <fullName>Keratin, type I cytoskeletal 13</fullName>
    </recommendedName>
    <alternativeName>
        <fullName>Cytokeratin-13</fullName>
        <shortName>CK-13</shortName>
    </alternativeName>
    <alternativeName>
        <fullName>Keratin-13</fullName>
        <shortName>K13</shortName>
    </alternativeName>
    <alternativeName>
        <fullName>Type I keratin Ka13</fullName>
    </alternativeName>
</protein>
<name>K1C13_RAT</name>
<keyword id="KW-0175">Coiled coil</keyword>
<keyword id="KW-0325">Glycoprotein</keyword>
<keyword id="KW-0403">Intermediate filament</keyword>
<keyword id="KW-0416">Keratin</keyword>
<keyword id="KW-0488">Methylation</keyword>
<keyword id="KW-1185">Reference proteome</keyword>
<organism>
    <name type="scientific">Rattus norvegicus</name>
    <name type="common">Rat</name>
    <dbReference type="NCBI Taxonomy" id="10116"/>
    <lineage>
        <taxon>Eukaryota</taxon>
        <taxon>Metazoa</taxon>
        <taxon>Chordata</taxon>
        <taxon>Craniata</taxon>
        <taxon>Vertebrata</taxon>
        <taxon>Euteleostomi</taxon>
        <taxon>Mammalia</taxon>
        <taxon>Eutheria</taxon>
        <taxon>Euarchontoglires</taxon>
        <taxon>Glires</taxon>
        <taxon>Rodentia</taxon>
        <taxon>Myomorpha</taxon>
        <taxon>Muroidea</taxon>
        <taxon>Muridae</taxon>
        <taxon>Murinae</taxon>
        <taxon>Rattus</taxon>
    </lineage>
</organism>
<proteinExistence type="inferred from homology"/>
<accession>Q6IFV4</accession>
<feature type="chain" id="PRO_0000063649" description="Keratin, type I cytoskeletal 13">
    <location>
        <begin position="1"/>
        <end position="438"/>
    </location>
</feature>
<feature type="domain" description="IF rod" evidence="4">
    <location>
        <begin position="96"/>
        <end position="408"/>
    </location>
</feature>
<feature type="region of interest" description="Head" evidence="3">
    <location>
        <begin position="1"/>
        <end position="95"/>
    </location>
</feature>
<feature type="region of interest" description="Coil" evidence="3">
    <location>
        <begin position="96"/>
        <end position="131"/>
    </location>
</feature>
<feature type="region of interest" description="Linker 1" evidence="3">
    <location>
        <begin position="132"/>
        <end position="150"/>
    </location>
</feature>
<feature type="region of interest" description="Coil 1B" evidence="3">
    <location>
        <begin position="151"/>
        <end position="242"/>
    </location>
</feature>
<feature type="region of interest" description="Linker 12" evidence="3">
    <location>
        <begin position="243"/>
        <end position="265"/>
    </location>
</feature>
<feature type="region of interest" description="Coil 2" evidence="3">
    <location>
        <begin position="266"/>
        <end position="404"/>
    </location>
</feature>
<feature type="region of interest" description="Tail" evidence="3">
    <location>
        <begin position="405"/>
        <end position="438"/>
    </location>
</feature>
<feature type="region of interest" description="Disordered" evidence="5">
    <location>
        <begin position="408"/>
        <end position="438"/>
    </location>
</feature>
<feature type="compositionally biased region" description="Low complexity" evidence="5">
    <location>
        <begin position="409"/>
        <end position="431"/>
    </location>
</feature>
<feature type="modified residue" description="Omega-N-methylarginine" evidence="2">
    <location>
        <position position="27"/>
    </location>
</feature>
<feature type="modified residue" description="Omega-N-methylarginine" evidence="2">
    <location>
        <position position="35"/>
    </location>
</feature>
<comment type="function">
    <text evidence="1 7">Type 1 keratin (Probable). Maintains postnatal tongue mucosal cell homeostasis and tissue organization in response to mechanical stress, potentially via regulation of the G1/S phase cyclins CCNE1 and CCNE2 (By similarity).</text>
</comment>
<comment type="subunit">
    <text evidence="7">Heterotetramer of two type I and two type II keratins.</text>
</comment>
<comment type="PTM">
    <text evidence="2">O-glycosylated; glycans consist of single N-acetylglucosamine residues.</text>
</comment>
<comment type="miscellaneous">
    <text>There are two types of cytoskeletal and microfibrillar keratin: I (acidic; 40-55 kDa) and II (neutral to basic; 56-70 kDa).</text>
</comment>
<comment type="similarity">
    <text evidence="4">Belongs to the intermediate filament family.</text>
</comment>
<evidence type="ECO:0000250" key="1">
    <source>
        <dbReference type="UniProtKB" id="P08730"/>
    </source>
</evidence>
<evidence type="ECO:0000250" key="2">
    <source>
        <dbReference type="UniProtKB" id="P13646"/>
    </source>
</evidence>
<evidence type="ECO:0000255" key="3"/>
<evidence type="ECO:0000255" key="4">
    <source>
        <dbReference type="PROSITE-ProRule" id="PRU01188"/>
    </source>
</evidence>
<evidence type="ECO:0000256" key="5">
    <source>
        <dbReference type="SAM" id="MobiDB-lite"/>
    </source>
</evidence>
<evidence type="ECO:0000269" key="6">
    <source>
    </source>
</evidence>
<evidence type="ECO:0000305" key="7"/>
<evidence type="ECO:0000312" key="8">
    <source>
        <dbReference type="EMBL" id="DAA04478.1"/>
    </source>
</evidence>